<sequence length="177" mass="19684">MAKEIKKIISIPEGVTVTFEKNVLSASGPKGTNTRFLWYPGVNIEVNGSEIIVDSASSRKKQKAMVGTYTSHITNMMKGVVDGFEYHMKVVYSHFPMQIKVNGKKFVINNFLGEKKPRVSNILGETSVKASGDEVIVSGINKEDVGQTAANIEQKTKIKRFDPRVFQDGIYIVDKRV</sequence>
<keyword id="KW-0687">Ribonucleoprotein</keyword>
<keyword id="KW-0689">Ribosomal protein</keyword>
<keyword id="KW-0694">RNA-binding</keyword>
<keyword id="KW-0699">rRNA-binding</keyword>
<comment type="function">
    <text evidence="1">This protein binds to the 23S rRNA, and is important in its secondary structure. It is located near the subunit interface in the base of the L7/L12 stalk, and near the tRNA binding site of the peptidyltransferase center.</text>
</comment>
<comment type="subunit">
    <text evidence="1">Part of the 50S ribosomal subunit.</text>
</comment>
<comment type="similarity">
    <text evidence="1">Belongs to the universal ribosomal protein uL6 family.</text>
</comment>
<feature type="chain" id="PRO_0000260984" description="Large ribosomal subunit protein uL6">
    <location>
        <begin position="1"/>
        <end position="177"/>
    </location>
</feature>
<protein>
    <recommendedName>
        <fullName evidence="1">Large ribosomal subunit protein uL6</fullName>
    </recommendedName>
    <alternativeName>
        <fullName evidence="2">50S ribosomal protein L6</fullName>
    </alternativeName>
</protein>
<dbReference type="EMBL" id="CP000300">
    <property type="protein sequence ID" value="ABE51041.1"/>
    <property type="molecule type" value="Genomic_DNA"/>
</dbReference>
<dbReference type="RefSeq" id="WP_011498205.1">
    <property type="nucleotide sequence ID" value="NC_007955.1"/>
</dbReference>
<dbReference type="SMR" id="Q12ZT5"/>
<dbReference type="STRING" id="259564.Mbur_0017"/>
<dbReference type="GeneID" id="3996917"/>
<dbReference type="KEGG" id="mbu:Mbur_0017"/>
<dbReference type="HOGENOM" id="CLU_065464_0_0_2"/>
<dbReference type="OrthoDB" id="7144at2157"/>
<dbReference type="Proteomes" id="UP000001979">
    <property type="component" value="Chromosome"/>
</dbReference>
<dbReference type="GO" id="GO:0022625">
    <property type="term" value="C:cytosolic large ribosomal subunit"/>
    <property type="evidence" value="ECO:0007669"/>
    <property type="project" value="TreeGrafter"/>
</dbReference>
<dbReference type="GO" id="GO:0019843">
    <property type="term" value="F:rRNA binding"/>
    <property type="evidence" value="ECO:0007669"/>
    <property type="project" value="UniProtKB-UniRule"/>
</dbReference>
<dbReference type="GO" id="GO:0003735">
    <property type="term" value="F:structural constituent of ribosome"/>
    <property type="evidence" value="ECO:0007669"/>
    <property type="project" value="InterPro"/>
</dbReference>
<dbReference type="GO" id="GO:0002181">
    <property type="term" value="P:cytoplasmic translation"/>
    <property type="evidence" value="ECO:0007669"/>
    <property type="project" value="TreeGrafter"/>
</dbReference>
<dbReference type="FunFam" id="3.90.930.12:FF:000008">
    <property type="entry name" value="50S ribosomal protein L6"/>
    <property type="match status" value="1"/>
</dbReference>
<dbReference type="Gene3D" id="3.90.930.12">
    <property type="entry name" value="Ribosomal protein L6, alpha-beta domain"/>
    <property type="match status" value="2"/>
</dbReference>
<dbReference type="HAMAP" id="MF_01365_A">
    <property type="entry name" value="Ribosomal_uL6_A"/>
    <property type="match status" value="1"/>
</dbReference>
<dbReference type="InterPro" id="IPR000702">
    <property type="entry name" value="Ribosomal_uL6-like"/>
</dbReference>
<dbReference type="InterPro" id="IPR036789">
    <property type="entry name" value="Ribosomal_uL6-like_a/b-dom_sf"/>
</dbReference>
<dbReference type="InterPro" id="IPR020040">
    <property type="entry name" value="Ribosomal_uL6_a/b-dom"/>
</dbReference>
<dbReference type="InterPro" id="IPR019907">
    <property type="entry name" value="Ribosomal_uL6_arc"/>
</dbReference>
<dbReference type="InterPro" id="IPR002359">
    <property type="entry name" value="Ribosomal_uL6_CS2"/>
</dbReference>
<dbReference type="NCBIfam" id="NF004037">
    <property type="entry name" value="PRK05518.1"/>
    <property type="match status" value="1"/>
</dbReference>
<dbReference type="NCBIfam" id="TIGR03653">
    <property type="entry name" value="uL6_arch"/>
    <property type="match status" value="1"/>
</dbReference>
<dbReference type="PANTHER" id="PTHR11655:SF16">
    <property type="entry name" value="60S RIBOSOMAL PROTEIN L9"/>
    <property type="match status" value="1"/>
</dbReference>
<dbReference type="PANTHER" id="PTHR11655">
    <property type="entry name" value="60S/50S RIBOSOMAL PROTEIN L6/L9"/>
    <property type="match status" value="1"/>
</dbReference>
<dbReference type="Pfam" id="PF00347">
    <property type="entry name" value="Ribosomal_L6"/>
    <property type="match status" value="2"/>
</dbReference>
<dbReference type="PIRSF" id="PIRSF002162">
    <property type="entry name" value="Ribosomal_L6"/>
    <property type="match status" value="1"/>
</dbReference>
<dbReference type="SUPFAM" id="SSF56053">
    <property type="entry name" value="Ribosomal protein L6"/>
    <property type="match status" value="2"/>
</dbReference>
<dbReference type="PROSITE" id="PS00700">
    <property type="entry name" value="RIBOSOMAL_L6_2"/>
    <property type="match status" value="1"/>
</dbReference>
<proteinExistence type="inferred from homology"/>
<gene>
    <name evidence="1" type="primary">rpl6</name>
    <name type="ordered locus">Mbur_0017</name>
</gene>
<name>RL6_METBU</name>
<reference key="1">
    <citation type="journal article" date="2009" name="ISME J.">
        <title>The genome sequence of the psychrophilic archaeon, Methanococcoides burtonii: the role of genome evolution in cold adaptation.</title>
        <authorList>
            <person name="Allen M.A."/>
            <person name="Lauro F.M."/>
            <person name="Williams T.J."/>
            <person name="Burg D."/>
            <person name="Siddiqui K.S."/>
            <person name="De Francisci D."/>
            <person name="Chong K.W."/>
            <person name="Pilak O."/>
            <person name="Chew H.H."/>
            <person name="De Maere M.Z."/>
            <person name="Ting L."/>
            <person name="Katrib M."/>
            <person name="Ng C."/>
            <person name="Sowers K.R."/>
            <person name="Galperin M.Y."/>
            <person name="Anderson I.J."/>
            <person name="Ivanova N."/>
            <person name="Dalin E."/>
            <person name="Martinez M."/>
            <person name="Lapidus A."/>
            <person name="Hauser L."/>
            <person name="Land M."/>
            <person name="Thomas T."/>
            <person name="Cavicchioli R."/>
        </authorList>
    </citation>
    <scope>NUCLEOTIDE SEQUENCE [LARGE SCALE GENOMIC DNA]</scope>
    <source>
        <strain>DSM 6242 / NBRC 107633 / OCM 468 / ACE-M</strain>
    </source>
</reference>
<evidence type="ECO:0000255" key="1">
    <source>
        <dbReference type="HAMAP-Rule" id="MF_01365"/>
    </source>
</evidence>
<evidence type="ECO:0000305" key="2"/>
<accession>Q12ZT5</accession>
<organism>
    <name type="scientific">Methanococcoides burtonii (strain DSM 6242 / NBRC 107633 / OCM 468 / ACE-M)</name>
    <dbReference type="NCBI Taxonomy" id="259564"/>
    <lineage>
        <taxon>Archaea</taxon>
        <taxon>Methanobacteriati</taxon>
        <taxon>Methanobacteriota</taxon>
        <taxon>Stenosarchaea group</taxon>
        <taxon>Methanomicrobia</taxon>
        <taxon>Methanosarcinales</taxon>
        <taxon>Methanosarcinaceae</taxon>
        <taxon>Methanococcoides</taxon>
    </lineage>
</organism>